<keyword id="KW-1185">Reference proteome</keyword>
<keyword id="KW-0687">Ribonucleoprotein</keyword>
<keyword id="KW-0689">Ribosomal protein</keyword>
<keyword id="KW-0694">RNA-binding</keyword>
<keyword id="KW-0699">rRNA-binding</keyword>
<evidence type="ECO:0000255" key="1">
    <source>
        <dbReference type="HAMAP-Rule" id="MF_01331"/>
    </source>
</evidence>
<evidence type="ECO:0000256" key="2">
    <source>
        <dbReference type="SAM" id="MobiDB-lite"/>
    </source>
</evidence>
<evidence type="ECO:0000305" key="3"/>
<accession>A4FPM0</accession>
<gene>
    <name evidence="1" type="primary">rplV</name>
    <name type="ordered locus">SACE_6831</name>
</gene>
<reference key="1">
    <citation type="journal article" date="2007" name="Nat. Biotechnol.">
        <title>Complete genome sequence of the erythromycin-producing bacterium Saccharopolyspora erythraea NRRL23338.</title>
        <authorList>
            <person name="Oliynyk M."/>
            <person name="Samborskyy M."/>
            <person name="Lester J.B."/>
            <person name="Mironenko T."/>
            <person name="Scott N."/>
            <person name="Dickens S."/>
            <person name="Haydock S.F."/>
            <person name="Leadlay P.F."/>
        </authorList>
    </citation>
    <scope>NUCLEOTIDE SEQUENCE [LARGE SCALE GENOMIC DNA]</scope>
    <source>
        <strain>ATCC 11635 / DSM 40517 / JCM 4748 / NBRC 13426 / NCIMB 8594 / NRRL 2338</strain>
    </source>
</reference>
<organism>
    <name type="scientific">Saccharopolyspora erythraea (strain ATCC 11635 / DSM 40517 / JCM 4748 / NBRC 13426 / NCIMB 8594 / NRRL 2338)</name>
    <dbReference type="NCBI Taxonomy" id="405948"/>
    <lineage>
        <taxon>Bacteria</taxon>
        <taxon>Bacillati</taxon>
        <taxon>Actinomycetota</taxon>
        <taxon>Actinomycetes</taxon>
        <taxon>Pseudonocardiales</taxon>
        <taxon>Pseudonocardiaceae</taxon>
        <taxon>Saccharopolyspora</taxon>
    </lineage>
</organism>
<proteinExistence type="inferred from homology"/>
<name>RL22_SACEN</name>
<dbReference type="EMBL" id="AM420293">
    <property type="protein sequence ID" value="CAM05995.1"/>
    <property type="status" value="ALT_INIT"/>
    <property type="molecule type" value="Genomic_DNA"/>
</dbReference>
<dbReference type="RefSeq" id="WP_029621862.1">
    <property type="nucleotide sequence ID" value="NC_009142.1"/>
</dbReference>
<dbReference type="SMR" id="A4FPM0"/>
<dbReference type="STRING" id="405948.SACE_6831"/>
<dbReference type="KEGG" id="sen:SACE_6831"/>
<dbReference type="eggNOG" id="COG0091">
    <property type="taxonomic scope" value="Bacteria"/>
</dbReference>
<dbReference type="HOGENOM" id="CLU_083987_3_2_11"/>
<dbReference type="Proteomes" id="UP000006728">
    <property type="component" value="Chromosome"/>
</dbReference>
<dbReference type="GO" id="GO:0022625">
    <property type="term" value="C:cytosolic large ribosomal subunit"/>
    <property type="evidence" value="ECO:0007669"/>
    <property type="project" value="TreeGrafter"/>
</dbReference>
<dbReference type="GO" id="GO:0019843">
    <property type="term" value="F:rRNA binding"/>
    <property type="evidence" value="ECO:0007669"/>
    <property type="project" value="UniProtKB-UniRule"/>
</dbReference>
<dbReference type="GO" id="GO:0003735">
    <property type="term" value="F:structural constituent of ribosome"/>
    <property type="evidence" value="ECO:0007669"/>
    <property type="project" value="InterPro"/>
</dbReference>
<dbReference type="GO" id="GO:0006412">
    <property type="term" value="P:translation"/>
    <property type="evidence" value="ECO:0007669"/>
    <property type="project" value="UniProtKB-UniRule"/>
</dbReference>
<dbReference type="CDD" id="cd00336">
    <property type="entry name" value="Ribosomal_L22"/>
    <property type="match status" value="1"/>
</dbReference>
<dbReference type="FunFam" id="3.90.470.10:FF:000002">
    <property type="entry name" value="50S ribosomal protein L22"/>
    <property type="match status" value="1"/>
</dbReference>
<dbReference type="Gene3D" id="3.90.470.10">
    <property type="entry name" value="Ribosomal protein L22/L17"/>
    <property type="match status" value="1"/>
</dbReference>
<dbReference type="HAMAP" id="MF_01331_B">
    <property type="entry name" value="Ribosomal_uL22_B"/>
    <property type="match status" value="1"/>
</dbReference>
<dbReference type="InterPro" id="IPR001063">
    <property type="entry name" value="Ribosomal_uL22"/>
</dbReference>
<dbReference type="InterPro" id="IPR005727">
    <property type="entry name" value="Ribosomal_uL22_bac/chlpt-type"/>
</dbReference>
<dbReference type="InterPro" id="IPR047867">
    <property type="entry name" value="Ribosomal_uL22_bac/org-type"/>
</dbReference>
<dbReference type="InterPro" id="IPR018260">
    <property type="entry name" value="Ribosomal_uL22_CS"/>
</dbReference>
<dbReference type="InterPro" id="IPR036394">
    <property type="entry name" value="Ribosomal_uL22_sf"/>
</dbReference>
<dbReference type="NCBIfam" id="TIGR01044">
    <property type="entry name" value="rplV_bact"/>
    <property type="match status" value="1"/>
</dbReference>
<dbReference type="PANTHER" id="PTHR13501">
    <property type="entry name" value="CHLOROPLAST 50S RIBOSOMAL PROTEIN L22-RELATED"/>
    <property type="match status" value="1"/>
</dbReference>
<dbReference type="PANTHER" id="PTHR13501:SF8">
    <property type="entry name" value="LARGE RIBOSOMAL SUBUNIT PROTEIN UL22M"/>
    <property type="match status" value="1"/>
</dbReference>
<dbReference type="Pfam" id="PF00237">
    <property type="entry name" value="Ribosomal_L22"/>
    <property type="match status" value="1"/>
</dbReference>
<dbReference type="SUPFAM" id="SSF54843">
    <property type="entry name" value="Ribosomal protein L22"/>
    <property type="match status" value="1"/>
</dbReference>
<dbReference type="PROSITE" id="PS00464">
    <property type="entry name" value="RIBOSOMAL_L22"/>
    <property type="match status" value="1"/>
</dbReference>
<comment type="function">
    <text evidence="1">This protein binds specifically to 23S rRNA; its binding is stimulated by other ribosomal proteins, e.g. L4, L17, and L20. It is important during the early stages of 50S assembly. It makes multiple contacts with different domains of the 23S rRNA in the assembled 50S subunit and ribosome (By similarity).</text>
</comment>
<comment type="function">
    <text evidence="1">The globular domain of the protein is located near the polypeptide exit tunnel on the outside of the subunit, while an extended beta-hairpin is found that lines the wall of the exit tunnel in the center of the 70S ribosome.</text>
</comment>
<comment type="subunit">
    <text evidence="1">Part of the 50S ribosomal subunit.</text>
</comment>
<comment type="similarity">
    <text evidence="1">Belongs to the universal ribosomal protein uL22 family.</text>
</comment>
<comment type="sequence caution" evidence="3">
    <conflict type="erroneous initiation">
        <sequence resource="EMBL-CDS" id="CAM05995"/>
    </conflict>
</comment>
<feature type="chain" id="PRO_0000354515" description="Large ribosomal subunit protein uL22">
    <location>
        <begin position="1"/>
        <end position="139"/>
    </location>
</feature>
<feature type="region of interest" description="Disordered" evidence="2">
    <location>
        <begin position="118"/>
        <end position="139"/>
    </location>
</feature>
<feature type="compositionally biased region" description="Basic residues" evidence="2">
    <location>
        <begin position="125"/>
        <end position="139"/>
    </location>
</feature>
<sequence>MTARIDDTAAEENPRAVARARFVRVTPMKARRVVELIKGRSASEALAVLQFAPQAASGPVSKVLASAVANAENNLSLDPDTLWVHRAYVDEGPTLKRFRPRAQGRAYRIRKRTSHITVEVESRPKKVASKSKSQKGSAR</sequence>
<protein>
    <recommendedName>
        <fullName evidence="1">Large ribosomal subunit protein uL22</fullName>
    </recommendedName>
    <alternativeName>
        <fullName evidence="3">50S ribosomal protein L22</fullName>
    </alternativeName>
</protein>